<accession>Q9C9C9</accession>
<accession>Q8LA18</accession>
<sequence length="350" mass="40465">MESETLTAKATITTTTLPSHDETKTESTEFEKNQKRYQDLISTFPHEKGWRPKEPLIEYGGYWWLPSLLEGCIHAQEFFQARPSDFLVCSYPKTGTTWLKALTFAIANRSRFDDSSNPLLKRNPHEFVPYIEIDFPFFPEVDVLKDKGNTLFSTHIPYELLPDSVVKSGCKMVYIWREPKDTFISMWTFLHKERTELGPVSNLEESFDMFCRGLSGYGPYLNHILAYWKAYQENPDRILFLKYETMRADPLPYVKSLAEFMGHGFTAEEEEKGVVEKVVNLCSFETLKNLEANKGEKDREDRPGVYANSAYFRKGKVGDWSNYLTPEMAARIDGLMEEKFKGTGLLEHGK</sequence>
<name>SOT18_ARATH</name>
<proteinExistence type="evidence at protein level"/>
<gene>
    <name type="primary">SOT18</name>
    <name type="synonym">ST5B</name>
    <name type="ordered locus">At1g74090</name>
    <name type="ORF">F2P9.4</name>
</gene>
<protein>
    <recommendedName>
        <fullName>Cytosolic sulfotransferase 18</fullName>
        <shortName>AtSOT18</shortName>
        <ecNumber evidence="6 7">2.8.2.38</ecNumber>
    </recommendedName>
    <alternativeName>
        <fullName>Desulfo-glucosinolate sulfotransferase B</fullName>
    </alternativeName>
    <alternativeName>
        <fullName>Sulfotransferase 5B</fullName>
        <shortName>AtST5b</shortName>
    </alternativeName>
</protein>
<dbReference type="EC" id="2.8.2.38" evidence="6 7"/>
<dbReference type="EMBL" id="AC016662">
    <property type="protein sequence ID" value="AAG52515.1"/>
    <property type="molecule type" value="Genomic_DNA"/>
</dbReference>
<dbReference type="EMBL" id="CP002684">
    <property type="protein sequence ID" value="AEE35549.1"/>
    <property type="molecule type" value="Genomic_DNA"/>
</dbReference>
<dbReference type="EMBL" id="BT004984">
    <property type="protein sequence ID" value="AAO50517.1"/>
    <property type="molecule type" value="mRNA"/>
</dbReference>
<dbReference type="EMBL" id="AK117463">
    <property type="protein sequence ID" value="BAC42128.1"/>
    <property type="molecule type" value="mRNA"/>
</dbReference>
<dbReference type="EMBL" id="AY088081">
    <property type="protein sequence ID" value="AAM65627.1"/>
    <property type="molecule type" value="mRNA"/>
</dbReference>
<dbReference type="PIR" id="H96768">
    <property type="entry name" value="H96768"/>
</dbReference>
<dbReference type="RefSeq" id="NP_177549.1">
    <property type="nucleotide sequence ID" value="NM_106069.3"/>
</dbReference>
<dbReference type="PDB" id="5MEK">
    <property type="method" value="X-ray"/>
    <property type="resolution" value="1.74 A"/>
    <property type="chains" value="A=26-347"/>
</dbReference>
<dbReference type="PDB" id="5MEX">
    <property type="method" value="X-ray"/>
    <property type="resolution" value="1.92 A"/>
    <property type="chains" value="A=26-347"/>
</dbReference>
<dbReference type="PDBsum" id="5MEK"/>
<dbReference type="PDBsum" id="5MEX"/>
<dbReference type="SMR" id="Q9C9C9"/>
<dbReference type="FunCoup" id="Q9C9C9">
    <property type="interactions" value="59"/>
</dbReference>
<dbReference type="STRING" id="3702.Q9C9C9"/>
<dbReference type="iPTMnet" id="Q9C9C9"/>
<dbReference type="MetOSite" id="Q9C9C9"/>
<dbReference type="PaxDb" id="3702-AT1G74090.1"/>
<dbReference type="ProteomicsDB" id="245327"/>
<dbReference type="EnsemblPlants" id="AT1G74090.1">
    <property type="protein sequence ID" value="AT1G74090.1"/>
    <property type="gene ID" value="AT1G74090"/>
</dbReference>
<dbReference type="GeneID" id="843749"/>
<dbReference type="Gramene" id="AT1G74090.1">
    <property type="protein sequence ID" value="AT1G74090.1"/>
    <property type="gene ID" value="AT1G74090"/>
</dbReference>
<dbReference type="KEGG" id="ath:AT1G74090"/>
<dbReference type="Araport" id="AT1G74090"/>
<dbReference type="TAIR" id="AT1G74090">
    <property type="gene designation" value="SOT18"/>
</dbReference>
<dbReference type="eggNOG" id="KOG1584">
    <property type="taxonomic scope" value="Eukaryota"/>
</dbReference>
<dbReference type="HOGENOM" id="CLU_027239_0_3_1"/>
<dbReference type="InParanoid" id="Q9C9C9"/>
<dbReference type="OMA" id="HKLPGEH"/>
<dbReference type="OrthoDB" id="205623at2759"/>
<dbReference type="PhylomeDB" id="Q9C9C9"/>
<dbReference type="BioCyc" id="MetaCyc:AT1G74090-MONOMER"/>
<dbReference type="BRENDA" id="2.8.2.38">
    <property type="organism ID" value="399"/>
</dbReference>
<dbReference type="PRO" id="PR:Q9C9C9"/>
<dbReference type="Proteomes" id="UP000006548">
    <property type="component" value="Chromosome 1"/>
</dbReference>
<dbReference type="ExpressionAtlas" id="Q9C9C9">
    <property type="expression patterns" value="baseline and differential"/>
</dbReference>
<dbReference type="GO" id="GO:0005737">
    <property type="term" value="C:cytoplasm"/>
    <property type="evidence" value="ECO:0007669"/>
    <property type="project" value="UniProtKB-SubCell"/>
</dbReference>
<dbReference type="GO" id="GO:0120527">
    <property type="term" value="F:aliphatic desulfoglucosinolate sulfotransferase activity"/>
    <property type="evidence" value="ECO:0007669"/>
    <property type="project" value="UniProtKB-EC"/>
</dbReference>
<dbReference type="GO" id="GO:0047364">
    <property type="term" value="F:aromatic desulfoglucosinolate sulfotransferase activity"/>
    <property type="evidence" value="ECO:0000314"/>
    <property type="project" value="TAIR"/>
</dbReference>
<dbReference type="GO" id="GO:0019761">
    <property type="term" value="P:glucosinolate biosynthetic process"/>
    <property type="evidence" value="ECO:0000314"/>
    <property type="project" value="TAIR"/>
</dbReference>
<dbReference type="FunFam" id="3.40.50.300:FF:001258">
    <property type="entry name" value="Sulfotransferase"/>
    <property type="match status" value="1"/>
</dbReference>
<dbReference type="Gene3D" id="3.40.50.300">
    <property type="entry name" value="P-loop containing nucleotide triphosphate hydrolases"/>
    <property type="match status" value="1"/>
</dbReference>
<dbReference type="InterPro" id="IPR027417">
    <property type="entry name" value="P-loop_NTPase"/>
</dbReference>
<dbReference type="InterPro" id="IPR000863">
    <property type="entry name" value="Sulfotransferase_dom"/>
</dbReference>
<dbReference type="PANTHER" id="PTHR11783">
    <property type="entry name" value="SULFOTRANSFERASE SULT"/>
    <property type="match status" value="1"/>
</dbReference>
<dbReference type="Pfam" id="PF00685">
    <property type="entry name" value="Sulfotransfer_1"/>
    <property type="match status" value="1"/>
</dbReference>
<dbReference type="SUPFAM" id="SSF52540">
    <property type="entry name" value="P-loop containing nucleoside triphosphate hydrolases"/>
    <property type="match status" value="1"/>
</dbReference>
<organism>
    <name type="scientific">Arabidopsis thaliana</name>
    <name type="common">Mouse-ear cress</name>
    <dbReference type="NCBI Taxonomy" id="3702"/>
    <lineage>
        <taxon>Eukaryota</taxon>
        <taxon>Viridiplantae</taxon>
        <taxon>Streptophyta</taxon>
        <taxon>Embryophyta</taxon>
        <taxon>Tracheophyta</taxon>
        <taxon>Spermatophyta</taxon>
        <taxon>Magnoliopsida</taxon>
        <taxon>eudicotyledons</taxon>
        <taxon>Gunneridae</taxon>
        <taxon>Pentapetalae</taxon>
        <taxon>rosids</taxon>
        <taxon>malvids</taxon>
        <taxon>Brassicales</taxon>
        <taxon>Brassicaceae</taxon>
        <taxon>Camelineae</taxon>
        <taxon>Arabidopsis</taxon>
    </lineage>
</organism>
<evidence type="ECO:0000250" key="1"/>
<evidence type="ECO:0000256" key="2">
    <source>
        <dbReference type="SAM" id="MobiDB-lite"/>
    </source>
</evidence>
<evidence type="ECO:0000269" key="3">
    <source>
    </source>
</evidence>
<evidence type="ECO:0000269" key="4">
    <source>
    </source>
</evidence>
<evidence type="ECO:0000269" key="5">
    <source>
    </source>
</evidence>
<evidence type="ECO:0000269" key="6">
    <source>
    </source>
</evidence>
<evidence type="ECO:0000269" key="7">
    <source>
    </source>
</evidence>
<evidence type="ECO:0000269" key="8">
    <source>
    </source>
</evidence>
<evidence type="ECO:0000305" key="9"/>
<evidence type="ECO:0007744" key="10">
    <source>
    </source>
</evidence>
<evidence type="ECO:0007829" key="11">
    <source>
        <dbReference type="PDB" id="5MEK"/>
    </source>
</evidence>
<reference key="1">
    <citation type="journal article" date="2000" name="Nature">
        <title>Sequence and analysis of chromosome 1 of the plant Arabidopsis thaliana.</title>
        <authorList>
            <person name="Theologis A."/>
            <person name="Ecker J.R."/>
            <person name="Palm C.J."/>
            <person name="Federspiel N.A."/>
            <person name="Kaul S."/>
            <person name="White O."/>
            <person name="Alonso J."/>
            <person name="Altafi H."/>
            <person name="Araujo R."/>
            <person name="Bowman C.L."/>
            <person name="Brooks S.Y."/>
            <person name="Buehler E."/>
            <person name="Chan A."/>
            <person name="Chao Q."/>
            <person name="Chen H."/>
            <person name="Cheuk R.F."/>
            <person name="Chin C.W."/>
            <person name="Chung M.K."/>
            <person name="Conn L."/>
            <person name="Conway A.B."/>
            <person name="Conway A.R."/>
            <person name="Creasy T.H."/>
            <person name="Dewar K."/>
            <person name="Dunn P."/>
            <person name="Etgu P."/>
            <person name="Feldblyum T.V."/>
            <person name="Feng J.-D."/>
            <person name="Fong B."/>
            <person name="Fujii C.Y."/>
            <person name="Gill J.E."/>
            <person name="Goldsmith A.D."/>
            <person name="Haas B."/>
            <person name="Hansen N.F."/>
            <person name="Hughes B."/>
            <person name="Huizar L."/>
            <person name="Hunter J.L."/>
            <person name="Jenkins J."/>
            <person name="Johnson-Hopson C."/>
            <person name="Khan S."/>
            <person name="Khaykin E."/>
            <person name="Kim C.J."/>
            <person name="Koo H.L."/>
            <person name="Kremenetskaia I."/>
            <person name="Kurtz D.B."/>
            <person name="Kwan A."/>
            <person name="Lam B."/>
            <person name="Langin-Hooper S."/>
            <person name="Lee A."/>
            <person name="Lee J.M."/>
            <person name="Lenz C.A."/>
            <person name="Li J.H."/>
            <person name="Li Y.-P."/>
            <person name="Lin X."/>
            <person name="Liu S.X."/>
            <person name="Liu Z.A."/>
            <person name="Luros J.S."/>
            <person name="Maiti R."/>
            <person name="Marziali A."/>
            <person name="Militscher J."/>
            <person name="Miranda M."/>
            <person name="Nguyen M."/>
            <person name="Nierman W.C."/>
            <person name="Osborne B.I."/>
            <person name="Pai G."/>
            <person name="Peterson J."/>
            <person name="Pham P.K."/>
            <person name="Rizzo M."/>
            <person name="Rooney T."/>
            <person name="Rowley D."/>
            <person name="Sakano H."/>
            <person name="Salzberg S.L."/>
            <person name="Schwartz J.R."/>
            <person name="Shinn P."/>
            <person name="Southwick A.M."/>
            <person name="Sun H."/>
            <person name="Tallon L.J."/>
            <person name="Tambunga G."/>
            <person name="Toriumi M.J."/>
            <person name="Town C.D."/>
            <person name="Utterback T."/>
            <person name="Van Aken S."/>
            <person name="Vaysberg M."/>
            <person name="Vysotskaia V.S."/>
            <person name="Walker M."/>
            <person name="Wu D."/>
            <person name="Yu G."/>
            <person name="Fraser C.M."/>
            <person name="Venter J.C."/>
            <person name="Davis R.W."/>
        </authorList>
    </citation>
    <scope>NUCLEOTIDE SEQUENCE [LARGE SCALE GENOMIC DNA]</scope>
    <source>
        <strain>cv. Columbia</strain>
    </source>
</reference>
<reference key="2">
    <citation type="journal article" date="2017" name="Plant J.">
        <title>Araport11: a complete reannotation of the Arabidopsis thaliana reference genome.</title>
        <authorList>
            <person name="Cheng C.Y."/>
            <person name="Krishnakumar V."/>
            <person name="Chan A.P."/>
            <person name="Thibaud-Nissen F."/>
            <person name="Schobel S."/>
            <person name="Town C.D."/>
        </authorList>
    </citation>
    <scope>GENOME REANNOTATION</scope>
    <source>
        <strain>cv. Columbia</strain>
    </source>
</reference>
<reference key="3">
    <citation type="journal article" date="2003" name="Science">
        <title>Empirical analysis of transcriptional activity in the Arabidopsis genome.</title>
        <authorList>
            <person name="Yamada K."/>
            <person name="Lim J."/>
            <person name="Dale J.M."/>
            <person name="Chen H."/>
            <person name="Shinn P."/>
            <person name="Palm C.J."/>
            <person name="Southwick A.M."/>
            <person name="Wu H.C."/>
            <person name="Kim C.J."/>
            <person name="Nguyen M."/>
            <person name="Pham P.K."/>
            <person name="Cheuk R.F."/>
            <person name="Karlin-Newmann G."/>
            <person name="Liu S.X."/>
            <person name="Lam B."/>
            <person name="Sakano H."/>
            <person name="Wu T."/>
            <person name="Yu G."/>
            <person name="Miranda M."/>
            <person name="Quach H.L."/>
            <person name="Tripp M."/>
            <person name="Chang C.H."/>
            <person name="Lee J.M."/>
            <person name="Toriumi M.J."/>
            <person name="Chan M.M."/>
            <person name="Tang C.C."/>
            <person name="Onodera C.S."/>
            <person name="Deng J.M."/>
            <person name="Akiyama K."/>
            <person name="Ansari Y."/>
            <person name="Arakawa T."/>
            <person name="Banh J."/>
            <person name="Banno F."/>
            <person name="Bowser L."/>
            <person name="Brooks S.Y."/>
            <person name="Carninci P."/>
            <person name="Chao Q."/>
            <person name="Choy N."/>
            <person name="Enju A."/>
            <person name="Goldsmith A.D."/>
            <person name="Gurjal M."/>
            <person name="Hansen N.F."/>
            <person name="Hayashizaki Y."/>
            <person name="Johnson-Hopson C."/>
            <person name="Hsuan V.W."/>
            <person name="Iida K."/>
            <person name="Karnes M."/>
            <person name="Khan S."/>
            <person name="Koesema E."/>
            <person name="Ishida J."/>
            <person name="Jiang P.X."/>
            <person name="Jones T."/>
            <person name="Kawai J."/>
            <person name="Kamiya A."/>
            <person name="Meyers C."/>
            <person name="Nakajima M."/>
            <person name="Narusaka M."/>
            <person name="Seki M."/>
            <person name="Sakurai T."/>
            <person name="Satou M."/>
            <person name="Tamse R."/>
            <person name="Vaysberg M."/>
            <person name="Wallender E.K."/>
            <person name="Wong C."/>
            <person name="Yamamura Y."/>
            <person name="Yuan S."/>
            <person name="Shinozaki K."/>
            <person name="Davis R.W."/>
            <person name="Theologis A."/>
            <person name="Ecker J.R."/>
        </authorList>
    </citation>
    <scope>NUCLEOTIDE SEQUENCE [LARGE SCALE MRNA]</scope>
    <source>
        <strain>cv. Columbia</strain>
    </source>
</reference>
<reference key="4">
    <citation type="journal article" date="2002" name="Science">
        <title>Functional annotation of a full-length Arabidopsis cDNA collection.</title>
        <authorList>
            <person name="Seki M."/>
            <person name="Narusaka M."/>
            <person name="Kamiya A."/>
            <person name="Ishida J."/>
            <person name="Satou M."/>
            <person name="Sakurai T."/>
            <person name="Nakajima M."/>
            <person name="Enju A."/>
            <person name="Akiyama K."/>
            <person name="Oono Y."/>
            <person name="Muramatsu M."/>
            <person name="Hayashizaki Y."/>
            <person name="Kawai J."/>
            <person name="Carninci P."/>
            <person name="Itoh M."/>
            <person name="Ishii Y."/>
            <person name="Arakawa T."/>
            <person name="Shibata K."/>
            <person name="Shinagawa A."/>
            <person name="Shinozaki K."/>
        </authorList>
    </citation>
    <scope>NUCLEOTIDE SEQUENCE [LARGE SCALE MRNA]</scope>
    <source>
        <strain>cv. Columbia</strain>
    </source>
</reference>
<reference key="5">
    <citation type="submission" date="2002-03" db="EMBL/GenBank/DDBJ databases">
        <title>Full-length cDNA from Arabidopsis thaliana.</title>
        <authorList>
            <person name="Brover V.V."/>
            <person name="Troukhan M.E."/>
            <person name="Alexandrov N.A."/>
            <person name="Lu Y.-P."/>
            <person name="Flavell R.B."/>
            <person name="Feldmann K.A."/>
        </authorList>
    </citation>
    <scope>NUCLEOTIDE SEQUENCE [LARGE SCALE MRNA]</scope>
</reference>
<reference key="6">
    <citation type="journal article" date="2004" name="J. Biol. Chem.">
        <title>Desulfoglucosinolate sulfotransferases from Arabidopsis thaliana catalyze the final step in the biosynthesis of the glucosinolate core structure.</title>
        <authorList>
            <person name="Piotrowski M."/>
            <person name="Schemenewitz A."/>
            <person name="Lopukhina A."/>
            <person name="Mueller A."/>
            <person name="Janowitz T."/>
            <person name="Weiler E.W."/>
            <person name="Oecking C."/>
        </authorList>
    </citation>
    <scope>FUNCTION</scope>
    <scope>INDUCTION</scope>
</reference>
<reference key="7">
    <citation type="journal article" date="2004" name="J. Exp. Bot.">
        <title>The multi-protein family of Arabidopsis sulphotransferases and their relatives in other plant species.</title>
        <authorList>
            <person name="Klein M."/>
            <person name="Papenbrock J."/>
        </authorList>
    </citation>
    <scope>GENE FAMILY</scope>
    <scope>SUBCELLULAR LOCATION</scope>
    <scope>NOMENCLATURE</scope>
</reference>
<reference key="8">
    <citation type="journal article" date="2005" name="J. Biol. Chem.">
        <title>Elucidation of gene-to-gene and metabolite-to-gene networks in Arabidopsis by integration of metabolomics and transcriptomics.</title>
        <authorList>
            <person name="Hirai M.Y."/>
            <person name="Klein M."/>
            <person name="Fujikawa Y."/>
            <person name="Yano M."/>
            <person name="Goodenowe D.B."/>
            <person name="Yamazaki Y."/>
            <person name="Kanaya S."/>
            <person name="Nakamura Y."/>
            <person name="Kitayama M."/>
            <person name="Suzuki H."/>
            <person name="Sakurai N."/>
            <person name="Shibata D."/>
            <person name="Tokuhisa J."/>
            <person name="Reichelt M."/>
            <person name="Gershenzon J."/>
            <person name="Papenbrock J."/>
            <person name="Saito K."/>
        </authorList>
    </citation>
    <scope>FUNCTION</scope>
    <scope>BIOPHYSICOCHEMICAL PROPERTIES</scope>
    <source>
        <strain>cv. Columbia</strain>
    </source>
</reference>
<reference key="9">
    <citation type="journal article" date="2006" name="FEBS J.">
        <title>The three desulfoglucosinolate sulfotransferase proteins in Arabidopsis have different substrate specificities and are differentially expressed.</title>
        <authorList>
            <person name="Klein M."/>
            <person name="Reichelt M."/>
            <person name="Gershenzon J."/>
            <person name="Papenbrock J."/>
        </authorList>
    </citation>
    <scope>MUTAGENESIS OF ASP-301</scope>
    <scope>FUNCTION</scope>
    <scope>CATALYTIC ACTIVITY</scope>
    <scope>SUBCELLULAR LOCATION</scope>
    <scope>TISSUE SPECIFICITY</scope>
    <scope>DEVELOPMENTAL STAGE</scope>
    <scope>INDUCTION</scope>
    <scope>BIOPHYSICOCHEMICAL PROPERTIES</scope>
    <scope>VARIANTS GLY-301 AND ASN-339</scope>
    <source>
        <strain>cv. C24</strain>
        <strain>cv. Columbia</strain>
    </source>
</reference>
<reference key="10">
    <citation type="journal article" date="2009" name="Physiol. Plantarum">
        <title>Kinetics and substrate specificities of desulfo-glucosinolate sulfotransferases in Arabidopsis thaliana.</title>
        <authorList>
            <person name="Klein M."/>
            <person name="Papenbrock J."/>
        </authorList>
    </citation>
    <scope>FUNCTION</scope>
    <scope>CATALYTIC ACTIVITY</scope>
    <scope>BIOPHYSICOCHEMICAL PROPERTIES</scope>
    <source>
        <strain>cv. C24</strain>
        <strain>cv. Columbia</strain>
    </source>
</reference>
<reference key="11">
    <citation type="journal article" date="2011" name="BMC Biotechnol.">
        <title>Modulation of sulfur metabolism enables efficient glucosinolate engineering.</title>
        <authorList>
            <person name="Moeldrup M.E."/>
            <person name="Geu-Flores F."/>
            <person name="Olsen C.E."/>
            <person name="Halkier B.A."/>
        </authorList>
    </citation>
    <scope>FUNCTION</scope>
</reference>
<reference key="12">
    <citation type="journal article" date="2012" name="Mol. Cell. Proteomics">
        <title>Comparative large-scale characterisation of plant vs. mammal proteins reveals similar and idiosyncratic N-alpha acetylation features.</title>
        <authorList>
            <person name="Bienvenut W.V."/>
            <person name="Sumpton D."/>
            <person name="Martinez A."/>
            <person name="Lilla S."/>
            <person name="Espagne C."/>
            <person name="Meinnel T."/>
            <person name="Giglione C."/>
        </authorList>
    </citation>
    <scope>ACETYLATION [LARGE SCALE ANALYSIS] AT MET-1</scope>
    <scope>IDENTIFICATION BY MASS SPECTROMETRY [LARGE SCALE ANALYSIS]</scope>
</reference>
<comment type="function">
    <text evidence="4 5 6 7 8">Sulfotransferase that utilizes 3'-phospho-5'-adenylyl sulfate (PAPS) as sulfonate donor to catalyze the sulfate conjugation of desulfo-glucosinolates (dsGSs), the final step in the biosynthesis of the glucosinolate core structure. Preferred substrate are the long-chain desulfo-glucosinolates, 7-methylthioheptyl and 8-methylthiooctyl, derived from methionine. Substrate preference is desulfo-benzyl glucosinolate &gt; desulfo-4-methylthiobutyl glucosinolate &gt; desulfo-6-methylthiohexyl glucosinolate &gt; desulfo-3-methylthiopropyl glucosinolate &gt; desulfo-indol-3-yl methyl glucosinolate &gt; desulfo-singrin &gt; desulfo-3-butenyl glucosinolate.</text>
</comment>
<comment type="catalytic activity">
    <reaction evidence="6 7">
        <text>an aliphatic (Z)-desulfo-glucosinolate + 3'-phosphoadenylyl sulfate = a (Z)-omega-(methylsulfanyl)-N-sulfo-alkylhydroximate S-glucoside + adenosine 3',5'-bisphosphate + H(+)</text>
        <dbReference type="Rhea" id="RHEA:52724"/>
        <dbReference type="Rhea" id="RHEA-COMP:13194"/>
        <dbReference type="Rhea" id="RHEA-COMP:18240"/>
        <dbReference type="ChEBI" id="CHEBI:15378"/>
        <dbReference type="ChEBI" id="CHEBI:58339"/>
        <dbReference type="ChEBI" id="CHEBI:58343"/>
        <dbReference type="ChEBI" id="CHEBI:136434"/>
        <dbReference type="ChEBI" id="CHEBI:192830"/>
        <dbReference type="EC" id="2.8.2.38"/>
    </reaction>
</comment>
<comment type="activity regulation">
    <text>Inhibited by phosphoadenosine 5'-phosphate (PAP).</text>
</comment>
<comment type="biophysicochemical properties">
    <kinetics>
        <KM evidence="5 6 7">50 uM for desulfobenzyl glucosinolate (in cv. Columbia)</KM>
        <KM evidence="5 6 7">35 uM for 3'-phospho-5'-adenylyl sulfate (in cv. C24)</KM>
        <KM evidence="5 6 7">60 uM for 3'-phospho-5'-adenylyl sulfate (in cv. Columbia)</KM>
        <KM evidence="5 6 7">100 uM for desulfo-3-methylthiopropyl glucosinolate (in cv. C24)</KM>
        <KM evidence="5 6 7">55 uM for desulfo-3-methylthiopropyl glucosinolate (in cv. Columbia)</KM>
        <KM evidence="5 6 7">130 uM for desulfo-4-methylthiobutyl glucosinolate (in cv. C24)</KM>
        <KM evidence="5 6 7">43 uM for desulfo-4-methylthiobutyl glucosinolate (in cv. Columbia)</KM>
        <Vmax evidence="5 6 7">171.0 pmol/sec/mg enzyme with desulfo-benzyl glucosinolate as substrate (in cv. C24)</Vmax>
        <Vmax evidence="5 6 7">851.0 pmol/sec/mg enzyme with desulfo-benzyl glucosinolate as substrate (in cv. Columbia)</Vmax>
        <Vmax evidence="5 6 7">467.0 pmol/sec/mg enzyme with desulfo-allyl glucosinolate as substrate (in cv. Columbia)</Vmax>
        <Vmax evidence="5 6 7">27.0 pmol/sec/mg enzyme with 3'-phosphoadenosine 5'-phosphosulfate as substrate (in cv. C24)</Vmax>
        <Vmax evidence="5 6 7">860.0 pmol/sec/mg enzyme with 3'-phosphoadenosine 5'-phosphosulfate as substrate (in cv. Columbia)</Vmax>
        <Vmax evidence="5 6 7">99.0 pmol/sec/mg enzyme with desulfo-3-methylthiopropyl glucosinolate as substrate (in cv. C24)</Vmax>
        <Vmax evidence="5 6 7">2763.0 pmol/sec/mg enzyme with desulfo-3-methylthiopropyl glucosinolate as substrate (in cv. Columbia)</Vmax>
        <Vmax evidence="5 6 7">131.0 pmol/sec/mg enzyme with desulfo-4-methylthiobutylglucosinolate as substrate (in cv. C24)</Vmax>
        <Vmax evidence="5 6 7">1883.0 pmol/sec/mg enzyme with desulfo-4-methylthiobutyl glucosinolate as substrate (in cv. Columbia)</Vmax>
    </kinetics>
    <phDependence>
        <text evidence="5 6 7">Optimum pH is 9.0.</text>
    </phDependence>
</comment>
<comment type="subcellular location">
    <subcellularLocation>
        <location evidence="3 6">Cytoplasm</location>
    </subcellularLocation>
</comment>
<comment type="tissue specificity">
    <text evidence="6">Expressed in roots, leaves and stems. Barely detected in siliques and flowers.</text>
</comment>
<comment type="developmental stage">
    <text evidence="6">Low expression in young plants (up to 4 weeks), then slight increase in older plants.</text>
</comment>
<comment type="induction">
    <text evidence="4 6">Not induced by coronatine, methyl jasmonate or high sulfate concentration.</text>
</comment>
<comment type="polymorphism">
    <text evidence="6">In cv. C24, the substrate preference is restricted to a small number of desulfo-gulcosinolates: desulfo-6-methylthiohexyl glucosinolate &gt; desulfo-benzyl glucosinolate &gt; desulfo-2-phenylethyl glucosinolate (PubMed:16367753).</text>
</comment>
<comment type="miscellaneous">
    <text>Strong differences in the kinetic behavior between the same protein from different cultivars.</text>
</comment>
<comment type="similarity">
    <text evidence="9">Belongs to the sulfotransferase 1 family.</text>
</comment>
<keyword id="KW-0002">3D-structure</keyword>
<keyword id="KW-0007">Acetylation</keyword>
<keyword id="KW-0963">Cytoplasm</keyword>
<keyword id="KW-1185">Reference proteome</keyword>
<keyword id="KW-0808">Transferase</keyword>
<feature type="chain" id="PRO_0000315847" description="Cytosolic sulfotransferase 18">
    <location>
        <begin position="1"/>
        <end position="350"/>
    </location>
</feature>
<feature type="region of interest" description="Disordered" evidence="2">
    <location>
        <begin position="1"/>
        <end position="28"/>
    </location>
</feature>
<feature type="compositionally biased region" description="Low complexity" evidence="2">
    <location>
        <begin position="1"/>
        <end position="17"/>
    </location>
</feature>
<feature type="compositionally biased region" description="Basic and acidic residues" evidence="2">
    <location>
        <begin position="19"/>
        <end position="28"/>
    </location>
</feature>
<feature type="active site" description="Proton acceptor" evidence="1">
    <location>
        <position position="155"/>
    </location>
</feature>
<feature type="binding site" evidence="1">
    <location>
        <begin position="93"/>
        <end position="98"/>
    </location>
    <ligand>
        <name>3'-phosphoadenylyl sulfate</name>
        <dbReference type="ChEBI" id="CHEBI:58339"/>
    </ligand>
</feature>
<feature type="binding site" evidence="1">
    <location>
        <position position="177"/>
    </location>
    <ligand>
        <name>3'-phosphoadenylyl sulfate</name>
        <dbReference type="ChEBI" id="CHEBI:58339"/>
    </ligand>
</feature>
<feature type="binding site" evidence="1">
    <location>
        <position position="185"/>
    </location>
    <ligand>
        <name>3'-phosphoadenylyl sulfate</name>
        <dbReference type="ChEBI" id="CHEBI:58339"/>
    </ligand>
</feature>
<feature type="binding site" evidence="1">
    <location>
        <position position="243"/>
    </location>
    <ligand>
        <name>3'-phosphoadenylyl sulfate</name>
        <dbReference type="ChEBI" id="CHEBI:58339"/>
    </ligand>
</feature>
<feature type="binding site" evidence="1">
    <location>
        <begin position="313"/>
        <end position="315"/>
    </location>
    <ligand>
        <name>3'-phosphoadenylyl sulfate</name>
        <dbReference type="ChEBI" id="CHEBI:58339"/>
    </ligand>
</feature>
<feature type="modified residue" description="N-acetylmethionine" evidence="10">
    <location>
        <position position="1"/>
    </location>
</feature>
<feature type="sequence variant" description="In strain: cv. C24." evidence="6">
    <original>D</original>
    <variation>G</variation>
    <location>
        <position position="301"/>
    </location>
</feature>
<feature type="sequence variant" description="In strain: cv. C24." evidence="6">
    <original>K</original>
    <variation>N</variation>
    <location>
        <position position="339"/>
    </location>
</feature>
<feature type="mutagenesis site" description="25 time reduction of activity with desulfo-benzyl glucosinolate as substrate." evidence="6">
    <original>D</original>
    <variation>G</variation>
    <location>
        <position position="301"/>
    </location>
</feature>
<feature type="sequence conflict" description="In Ref. 5; AAM65627." evidence="9" ref="5">
    <original>E</original>
    <variation>K</variation>
    <location>
        <position position="31"/>
    </location>
</feature>
<feature type="helix" evidence="11">
    <location>
        <begin position="29"/>
        <end position="42"/>
    </location>
</feature>
<feature type="strand" evidence="11">
    <location>
        <begin position="46"/>
        <end position="51"/>
    </location>
</feature>
<feature type="strand" evidence="11">
    <location>
        <begin position="54"/>
        <end position="59"/>
    </location>
</feature>
<feature type="strand" evidence="11">
    <location>
        <begin position="62"/>
        <end position="64"/>
    </location>
</feature>
<feature type="helix" evidence="11">
    <location>
        <begin position="66"/>
        <end position="78"/>
    </location>
</feature>
<feature type="strand" evidence="11">
    <location>
        <begin position="86"/>
        <end position="90"/>
    </location>
</feature>
<feature type="helix" evidence="11">
    <location>
        <begin position="96"/>
        <end position="108"/>
    </location>
</feature>
<feature type="turn" evidence="11">
    <location>
        <begin position="109"/>
        <end position="111"/>
    </location>
</feature>
<feature type="helix" evidence="11">
    <location>
        <begin position="114"/>
        <end position="116"/>
    </location>
</feature>
<feature type="helix" evidence="11">
    <location>
        <begin position="118"/>
        <end position="120"/>
    </location>
</feature>
<feature type="helix" evidence="11">
    <location>
        <begin position="124"/>
        <end position="127"/>
    </location>
</feature>
<feature type="turn" evidence="11">
    <location>
        <begin position="131"/>
        <end position="133"/>
    </location>
</feature>
<feature type="helix" evidence="11">
    <location>
        <begin position="134"/>
        <end position="137"/>
    </location>
</feature>
<feature type="helix" evidence="11">
    <location>
        <begin position="142"/>
        <end position="145"/>
    </location>
</feature>
<feature type="strand" evidence="11">
    <location>
        <begin position="151"/>
        <end position="154"/>
    </location>
</feature>
<feature type="helix" evidence="11">
    <location>
        <begin position="158"/>
        <end position="160"/>
    </location>
</feature>
<feature type="helix" evidence="11">
    <location>
        <begin position="163"/>
        <end position="168"/>
    </location>
</feature>
<feature type="strand" evidence="11">
    <location>
        <begin position="171"/>
        <end position="176"/>
    </location>
</feature>
<feature type="helix" evidence="11">
    <location>
        <begin position="179"/>
        <end position="190"/>
    </location>
</feature>
<feature type="helix" evidence="11">
    <location>
        <begin position="203"/>
        <end position="211"/>
    </location>
</feature>
<feature type="helix" evidence="11">
    <location>
        <begin position="220"/>
        <end position="233"/>
    </location>
</feature>
<feature type="turn" evidence="11">
    <location>
        <begin position="235"/>
        <end position="237"/>
    </location>
</feature>
<feature type="strand" evidence="11">
    <location>
        <begin position="238"/>
        <end position="242"/>
    </location>
</feature>
<feature type="helix" evidence="11">
    <location>
        <begin position="243"/>
        <end position="248"/>
    </location>
</feature>
<feature type="helix" evidence="11">
    <location>
        <begin position="250"/>
        <end position="260"/>
    </location>
</feature>
<feature type="helix" evidence="11">
    <location>
        <begin position="267"/>
        <end position="271"/>
    </location>
</feature>
<feature type="helix" evidence="11">
    <location>
        <begin position="274"/>
        <end position="281"/>
    </location>
</feature>
<feature type="helix" evidence="11">
    <location>
        <begin position="284"/>
        <end position="288"/>
    </location>
</feature>
<feature type="helix" evidence="11">
    <location>
        <begin position="291"/>
        <end position="293"/>
    </location>
</feature>
<feature type="strand" evidence="11">
    <location>
        <begin position="300"/>
        <end position="302"/>
    </location>
</feature>
<feature type="helix" evidence="11">
    <location>
        <begin position="308"/>
        <end position="311"/>
    </location>
</feature>
<feature type="helix" evidence="11">
    <location>
        <begin position="319"/>
        <end position="322"/>
    </location>
</feature>
<feature type="helix" evidence="11">
    <location>
        <begin position="326"/>
        <end position="340"/>
    </location>
</feature>
<feature type="turn" evidence="11">
    <location>
        <begin position="341"/>
        <end position="343"/>
    </location>
</feature>